<dbReference type="EMBL" id="BC065580">
    <property type="protein sequence ID" value="AAH65580.1"/>
    <property type="molecule type" value="mRNA"/>
</dbReference>
<dbReference type="RefSeq" id="NP_112309.2">
    <property type="nucleotide sequence ID" value="NM_031047.2"/>
</dbReference>
<dbReference type="RefSeq" id="XP_006247491.1">
    <property type="nucleotide sequence ID" value="XM_006247429.4"/>
</dbReference>
<dbReference type="RefSeq" id="XP_006247492.1">
    <property type="nucleotide sequence ID" value="XM_006247430.5"/>
</dbReference>
<dbReference type="RefSeq" id="XP_017453037.1">
    <property type="nucleotide sequence ID" value="XM_017597548.1"/>
</dbReference>
<dbReference type="RefSeq" id="XP_063126014.1">
    <property type="nucleotide sequence ID" value="XM_063269944.1"/>
</dbReference>
<dbReference type="RefSeq" id="XP_063126015.1">
    <property type="nucleotide sequence ID" value="XM_063269945.1"/>
</dbReference>
<dbReference type="RefSeq" id="XP_063126016.1">
    <property type="nucleotide sequence ID" value="XM_063269946.1"/>
</dbReference>
<dbReference type="SMR" id="Q6P0K8"/>
<dbReference type="BioGRID" id="249576">
    <property type="interactions" value="1"/>
</dbReference>
<dbReference type="FunCoup" id="Q6P0K8">
    <property type="interactions" value="779"/>
</dbReference>
<dbReference type="IntAct" id="Q6P0K8">
    <property type="interactions" value="3"/>
</dbReference>
<dbReference type="MINT" id="Q6P0K8"/>
<dbReference type="STRING" id="10116.ENSRNOP00000070840"/>
<dbReference type="GlyCosmos" id="Q6P0K8">
    <property type="glycosylation" value="1 site, No reported glycans"/>
</dbReference>
<dbReference type="GlyGen" id="Q6P0K8">
    <property type="glycosylation" value="2 sites, 1 O-linked glycan (1 site)"/>
</dbReference>
<dbReference type="iPTMnet" id="Q6P0K8"/>
<dbReference type="PhosphoSitePlus" id="Q6P0K8"/>
<dbReference type="jPOST" id="Q6P0K8"/>
<dbReference type="PaxDb" id="10116-ENSRNOP00000043950"/>
<dbReference type="Ensembl" id="ENSRNOT00000040845.3">
    <property type="protein sequence ID" value="ENSRNOP00000043950.2"/>
    <property type="gene ID" value="ENSRNOG00000015380.7"/>
</dbReference>
<dbReference type="GeneID" id="81679"/>
<dbReference type="KEGG" id="rno:81679"/>
<dbReference type="UCSC" id="RGD:620412">
    <property type="organism name" value="rat"/>
</dbReference>
<dbReference type="AGR" id="RGD:620412"/>
<dbReference type="CTD" id="3728"/>
<dbReference type="RGD" id="620412">
    <property type="gene designation" value="Jup"/>
</dbReference>
<dbReference type="eggNOG" id="KOG4203">
    <property type="taxonomic scope" value="Eukaryota"/>
</dbReference>
<dbReference type="GeneTree" id="ENSGT00940000156395"/>
<dbReference type="InParanoid" id="Q6P0K8"/>
<dbReference type="OrthoDB" id="29490at9989"/>
<dbReference type="PhylomeDB" id="Q6P0K8"/>
<dbReference type="TreeFam" id="TF317997"/>
<dbReference type="Reactome" id="R-RNO-5218920">
    <property type="pathway name" value="VEGFR2 mediated vascular permeability"/>
</dbReference>
<dbReference type="Reactome" id="R-RNO-6798695">
    <property type="pathway name" value="Neutrophil degranulation"/>
</dbReference>
<dbReference type="Reactome" id="R-RNO-6805567">
    <property type="pathway name" value="Keratinization"/>
</dbReference>
<dbReference type="Reactome" id="R-RNO-6809371">
    <property type="pathway name" value="Formation of the cornified envelope"/>
</dbReference>
<dbReference type="Reactome" id="R-RNO-8980692">
    <property type="pathway name" value="RHOA GTPase cycle"/>
</dbReference>
<dbReference type="Reactome" id="R-RNO-9013026">
    <property type="pathway name" value="RHOB GTPase cycle"/>
</dbReference>
<dbReference type="Reactome" id="R-RNO-9013406">
    <property type="pathway name" value="RHOQ GTPase cycle"/>
</dbReference>
<dbReference type="Reactome" id="R-RNO-9013407">
    <property type="pathway name" value="RHOH GTPase cycle"/>
</dbReference>
<dbReference type="Reactome" id="R-RNO-9762292">
    <property type="pathway name" value="Regulation of CDH11 function"/>
</dbReference>
<dbReference type="PRO" id="PR:Q6P0K8"/>
<dbReference type="Proteomes" id="UP000002494">
    <property type="component" value="Chromosome 10"/>
</dbReference>
<dbReference type="Bgee" id="ENSRNOG00000015380">
    <property type="expression patterns" value="Expressed in esophagus and 19 other cell types or tissues"/>
</dbReference>
<dbReference type="GO" id="GO:0015629">
    <property type="term" value="C:actin cytoskeleton"/>
    <property type="evidence" value="ECO:0000314"/>
    <property type="project" value="RGD"/>
</dbReference>
<dbReference type="GO" id="GO:0005912">
    <property type="term" value="C:adherens junction"/>
    <property type="evidence" value="ECO:0000314"/>
    <property type="project" value="RGD"/>
</dbReference>
<dbReference type="GO" id="GO:0016327">
    <property type="term" value="C:apicolateral plasma membrane"/>
    <property type="evidence" value="ECO:0000314"/>
    <property type="project" value="RGD"/>
</dbReference>
<dbReference type="GO" id="GO:0016342">
    <property type="term" value="C:catenin complex"/>
    <property type="evidence" value="ECO:0000266"/>
    <property type="project" value="RGD"/>
</dbReference>
<dbReference type="GO" id="GO:0005911">
    <property type="term" value="C:cell-cell junction"/>
    <property type="evidence" value="ECO:0000314"/>
    <property type="project" value="RGD"/>
</dbReference>
<dbReference type="GO" id="GO:0001533">
    <property type="term" value="C:cornified envelope"/>
    <property type="evidence" value="ECO:0000266"/>
    <property type="project" value="RGD"/>
</dbReference>
<dbReference type="GO" id="GO:0005737">
    <property type="term" value="C:cytoplasm"/>
    <property type="evidence" value="ECO:0000266"/>
    <property type="project" value="RGD"/>
</dbReference>
<dbReference type="GO" id="GO:0009898">
    <property type="term" value="C:cytoplasmic side of plasma membrane"/>
    <property type="evidence" value="ECO:0000314"/>
    <property type="project" value="RGD"/>
</dbReference>
<dbReference type="GO" id="GO:0005829">
    <property type="term" value="C:cytosol"/>
    <property type="evidence" value="ECO:0000266"/>
    <property type="project" value="RGD"/>
</dbReference>
<dbReference type="GO" id="GO:0030057">
    <property type="term" value="C:desmosome"/>
    <property type="evidence" value="ECO:0000314"/>
    <property type="project" value="UniProtKB"/>
</dbReference>
<dbReference type="GO" id="GO:0005916">
    <property type="term" value="C:fascia adherens"/>
    <property type="evidence" value="ECO:0000314"/>
    <property type="project" value="RGD"/>
</dbReference>
<dbReference type="GO" id="GO:0071665">
    <property type="term" value="C:gamma-catenin-TCF7L2 complex"/>
    <property type="evidence" value="ECO:0000266"/>
    <property type="project" value="RGD"/>
</dbReference>
<dbReference type="GO" id="GO:0014704">
    <property type="term" value="C:intercalated disc"/>
    <property type="evidence" value="ECO:0000266"/>
    <property type="project" value="RGD"/>
</dbReference>
<dbReference type="GO" id="GO:0005882">
    <property type="term" value="C:intermediate filament"/>
    <property type="evidence" value="ECO:0000266"/>
    <property type="project" value="RGD"/>
</dbReference>
<dbReference type="GO" id="GO:0016328">
    <property type="term" value="C:lateral plasma membrane"/>
    <property type="evidence" value="ECO:0000314"/>
    <property type="project" value="RGD"/>
</dbReference>
<dbReference type="GO" id="GO:0005634">
    <property type="term" value="C:nucleus"/>
    <property type="evidence" value="ECO:0000266"/>
    <property type="project" value="RGD"/>
</dbReference>
<dbReference type="GO" id="GO:0005886">
    <property type="term" value="C:plasma membrane"/>
    <property type="evidence" value="ECO:0000266"/>
    <property type="project" value="RGD"/>
</dbReference>
<dbReference type="GO" id="GO:0032993">
    <property type="term" value="C:protein-DNA complex"/>
    <property type="evidence" value="ECO:0000266"/>
    <property type="project" value="RGD"/>
</dbReference>
<dbReference type="GO" id="GO:0030018">
    <property type="term" value="C:Z disc"/>
    <property type="evidence" value="ECO:0000266"/>
    <property type="project" value="RGD"/>
</dbReference>
<dbReference type="GO" id="GO:0045294">
    <property type="term" value="F:alpha-catenin binding"/>
    <property type="evidence" value="ECO:0000266"/>
    <property type="project" value="RGD"/>
</dbReference>
<dbReference type="GO" id="GO:0045296">
    <property type="term" value="F:cadherin binding"/>
    <property type="evidence" value="ECO:0000266"/>
    <property type="project" value="RGD"/>
</dbReference>
<dbReference type="GO" id="GO:0050839">
    <property type="term" value="F:cell adhesion molecule binding"/>
    <property type="evidence" value="ECO:0000266"/>
    <property type="project" value="RGD"/>
</dbReference>
<dbReference type="GO" id="GO:0106006">
    <property type="term" value="F:cytoskeletal protein-membrane anchor activity"/>
    <property type="evidence" value="ECO:0000266"/>
    <property type="project" value="RGD"/>
</dbReference>
<dbReference type="GO" id="GO:0016922">
    <property type="term" value="F:nuclear receptor binding"/>
    <property type="evidence" value="ECO:0000318"/>
    <property type="project" value="GO_Central"/>
</dbReference>
<dbReference type="GO" id="GO:0019901">
    <property type="term" value="F:protein kinase binding"/>
    <property type="evidence" value="ECO:0000353"/>
    <property type="project" value="RGD"/>
</dbReference>
<dbReference type="GO" id="GO:0019903">
    <property type="term" value="F:protein phosphatase binding"/>
    <property type="evidence" value="ECO:0000266"/>
    <property type="project" value="RGD"/>
</dbReference>
<dbReference type="GO" id="GO:1990782">
    <property type="term" value="F:protein tyrosine kinase binding"/>
    <property type="evidence" value="ECO:0000353"/>
    <property type="project" value="RGD"/>
</dbReference>
<dbReference type="GO" id="GO:0044877">
    <property type="term" value="F:protein-containing complex binding"/>
    <property type="evidence" value="ECO:0000353"/>
    <property type="project" value="RGD"/>
</dbReference>
<dbReference type="GO" id="GO:0003713">
    <property type="term" value="F:transcription coactivator activity"/>
    <property type="evidence" value="ECO:0000266"/>
    <property type="project" value="RGD"/>
</dbReference>
<dbReference type="GO" id="GO:0086073">
    <property type="term" value="P:bundle of His cell-Purkinje myocyte adhesion involved in cell communication"/>
    <property type="evidence" value="ECO:0000266"/>
    <property type="project" value="RGD"/>
</dbReference>
<dbReference type="GO" id="GO:0060070">
    <property type="term" value="P:canonical Wnt signaling pathway"/>
    <property type="evidence" value="ECO:0000318"/>
    <property type="project" value="GO_Central"/>
</dbReference>
<dbReference type="GO" id="GO:0007155">
    <property type="term" value="P:cell adhesion"/>
    <property type="evidence" value="ECO:0000266"/>
    <property type="project" value="RGD"/>
</dbReference>
<dbReference type="GO" id="GO:0016477">
    <property type="term" value="P:cell migration"/>
    <property type="evidence" value="ECO:0000266"/>
    <property type="project" value="RGD"/>
</dbReference>
<dbReference type="GO" id="GO:0098609">
    <property type="term" value="P:cell-cell adhesion"/>
    <property type="evidence" value="ECO:0000266"/>
    <property type="project" value="RGD"/>
</dbReference>
<dbReference type="GO" id="GO:0071681">
    <property type="term" value="P:cellular response to indole-3-methanol"/>
    <property type="evidence" value="ECO:0000266"/>
    <property type="project" value="RGD"/>
</dbReference>
<dbReference type="GO" id="GO:0002159">
    <property type="term" value="P:desmosome assembly"/>
    <property type="evidence" value="ECO:0000266"/>
    <property type="project" value="RGD"/>
</dbReference>
<dbReference type="GO" id="GO:0050982">
    <property type="term" value="P:detection of mechanical stimulus"/>
    <property type="evidence" value="ECO:0000266"/>
    <property type="project" value="RGD"/>
</dbReference>
<dbReference type="GO" id="GO:0043537">
    <property type="term" value="P:negative regulation of blood vessel endothelial cell migration"/>
    <property type="evidence" value="ECO:0000266"/>
    <property type="project" value="RGD"/>
</dbReference>
<dbReference type="GO" id="GO:0045766">
    <property type="term" value="P:positive regulation of angiogenesis"/>
    <property type="evidence" value="ECO:0000266"/>
    <property type="project" value="RGD"/>
</dbReference>
<dbReference type="GO" id="GO:0001954">
    <property type="term" value="P:positive regulation of cell-matrix adhesion"/>
    <property type="evidence" value="ECO:0000266"/>
    <property type="project" value="RGD"/>
</dbReference>
<dbReference type="GO" id="GO:0042307">
    <property type="term" value="P:positive regulation of protein import into nucleus"/>
    <property type="evidence" value="ECO:0000266"/>
    <property type="project" value="RGD"/>
</dbReference>
<dbReference type="GO" id="GO:0045944">
    <property type="term" value="P:positive regulation of transcription by RNA polymerase II"/>
    <property type="evidence" value="ECO:0000318"/>
    <property type="project" value="GO_Central"/>
</dbReference>
<dbReference type="GO" id="GO:0072659">
    <property type="term" value="P:protein localization to plasma membrane"/>
    <property type="evidence" value="ECO:0000266"/>
    <property type="project" value="RGD"/>
</dbReference>
<dbReference type="GO" id="GO:0042127">
    <property type="term" value="P:regulation of cell population proliferation"/>
    <property type="evidence" value="ECO:0000266"/>
    <property type="project" value="RGD"/>
</dbReference>
<dbReference type="GO" id="GO:0086091">
    <property type="term" value="P:regulation of heart rate by cardiac conduction"/>
    <property type="evidence" value="ECO:0000266"/>
    <property type="project" value="RGD"/>
</dbReference>
<dbReference type="GO" id="GO:0098911">
    <property type="term" value="P:regulation of ventricular cardiac muscle cell action potential"/>
    <property type="evidence" value="ECO:0000266"/>
    <property type="project" value="RGD"/>
</dbReference>
<dbReference type="GO" id="GO:0043588">
    <property type="term" value="P:skin development"/>
    <property type="evidence" value="ECO:0000266"/>
    <property type="project" value="RGD"/>
</dbReference>
<dbReference type="FunFam" id="1.25.10.10:FF:000015">
    <property type="entry name" value="Catenin beta-1"/>
    <property type="match status" value="1"/>
</dbReference>
<dbReference type="Gene3D" id="1.25.10.10">
    <property type="entry name" value="Leucine-rich Repeat Variant"/>
    <property type="match status" value="1"/>
</dbReference>
<dbReference type="InterPro" id="IPR011989">
    <property type="entry name" value="ARM-like"/>
</dbReference>
<dbReference type="InterPro" id="IPR016024">
    <property type="entry name" value="ARM-type_fold"/>
</dbReference>
<dbReference type="InterPro" id="IPR000225">
    <property type="entry name" value="Armadillo"/>
</dbReference>
<dbReference type="InterPro" id="IPR013284">
    <property type="entry name" value="Beta-catenin"/>
</dbReference>
<dbReference type="PANTHER" id="PTHR45976">
    <property type="entry name" value="ARMADILLO SEGMENT POLARITY PROTEIN"/>
    <property type="match status" value="1"/>
</dbReference>
<dbReference type="Pfam" id="PF00514">
    <property type="entry name" value="Arm"/>
    <property type="match status" value="3"/>
</dbReference>
<dbReference type="PRINTS" id="PR01869">
    <property type="entry name" value="BCATNINFAMLY"/>
</dbReference>
<dbReference type="SMART" id="SM00185">
    <property type="entry name" value="ARM"/>
    <property type="match status" value="12"/>
</dbReference>
<dbReference type="SUPFAM" id="SSF48371">
    <property type="entry name" value="ARM repeat"/>
    <property type="match status" value="1"/>
</dbReference>
<dbReference type="PROSITE" id="PS50176">
    <property type="entry name" value="ARM_REPEAT"/>
    <property type="match status" value="9"/>
</dbReference>
<comment type="function">
    <text evidence="1">Common junctional plaque protein. The membrane-associated plaques are architectural elements in an important strategic position to influence the arrangement and function of both the cytoskeleton and the cells within the tissue. The presence of plakoglobin in both the desmosomes and in the intermediate junctions suggests that it plays a central role in the structure and function of submembranous plaques. Acts as a substrate for VE-PTP and is required by it to stimulate VE-cadherin function in endothelial cells. Can replace beta-catenin in E-cadherin/catenin adhesion complexes which are proposed to couple cadherins to the actin cytoskeleton (By similarity).</text>
</comment>
<comment type="subunit">
    <text evidence="1 2">Homodimer. Component of an E-cadherin/catenin adhesion complex composed of at least E-cadherin/CDH1 and gamma-catenin/JUP, and possibly alpha-catenin/CTNNA1; the complex is located to adherens junctions. The stable association of CTNNA1 is controversial as CTNNA1 was shown not to bind to F-actin when assembled in the complex. Interacts with MUC1. Interacts with CAV1. Interacts with PTPRJ. Interacts with DSG1. Interacts with DSC1 and DSC2. Interacts with PKP2 (By similarity). Interacts with PKP3 (via N-terminus); the interaction is required for PKP3 localization to desmosome cell-cell junctions (By similarity). Interacts with DSG4 (By similarity).</text>
</comment>
<comment type="subcellular location">
    <subcellularLocation>
        <location evidence="2">Cell junction</location>
        <location evidence="2">Adherens junction</location>
    </subcellularLocation>
    <subcellularLocation>
        <location evidence="4 5">Cell junction</location>
        <location evidence="4 5">Desmosome</location>
    </subcellularLocation>
    <subcellularLocation>
        <location evidence="2">Cytoplasm</location>
        <location evidence="2">Cytoskeleton</location>
    </subcellularLocation>
    <subcellularLocation>
        <location evidence="2">Cell membrane</location>
        <topology evidence="2">Peripheral membrane protein</topology>
    </subcellularLocation>
    <subcellularLocation>
        <location evidence="3">Cytoplasm</location>
    </subcellularLocation>
    <subcellularLocation>
        <location evidence="3">Cell junction</location>
    </subcellularLocation>
    <subcellularLocation>
        <location evidence="3">Nucleus</location>
    </subcellularLocation>
    <text evidence="2">Cytoplasmic in a soluble and membrane-associated form. Colocalizes with DSG4 at desmosomes (By similarity).</text>
</comment>
<comment type="tissue specificity">
    <text evidence="4">Expressed in the heart (at protein level).</text>
</comment>
<comment type="domain">
    <text evidence="1">The entire ARM repeats region mediates binding to CDH1/E-cadherin. The N-terminus and first three ARM repeats are sufficient for binding to DSG1. The N-terminus and first ARM repeat are sufficient for association with CTNNA1. DSC1 association requires both ends of the ARM repeat region (By similarity).</text>
</comment>
<comment type="PTM">
    <text evidence="1">May be phosphorylated by FER.</text>
</comment>
<comment type="similarity">
    <text evidence="7">Belongs to the beta-catenin family.</text>
</comment>
<proteinExistence type="evidence at protein level"/>
<organism>
    <name type="scientific">Rattus norvegicus</name>
    <name type="common">Rat</name>
    <dbReference type="NCBI Taxonomy" id="10116"/>
    <lineage>
        <taxon>Eukaryota</taxon>
        <taxon>Metazoa</taxon>
        <taxon>Chordata</taxon>
        <taxon>Craniata</taxon>
        <taxon>Vertebrata</taxon>
        <taxon>Euteleostomi</taxon>
        <taxon>Mammalia</taxon>
        <taxon>Eutheria</taxon>
        <taxon>Euarchontoglires</taxon>
        <taxon>Glires</taxon>
        <taxon>Rodentia</taxon>
        <taxon>Myomorpha</taxon>
        <taxon>Muroidea</taxon>
        <taxon>Muridae</taxon>
        <taxon>Murinae</taxon>
        <taxon>Rattus</taxon>
    </lineage>
</organism>
<keyword id="KW-0007">Acetylation</keyword>
<keyword id="KW-0130">Cell adhesion</keyword>
<keyword id="KW-0965">Cell junction</keyword>
<keyword id="KW-1003">Cell membrane</keyword>
<keyword id="KW-0963">Cytoplasm</keyword>
<keyword id="KW-0206">Cytoskeleton</keyword>
<keyword id="KW-0903">Direct protein sequencing</keyword>
<keyword id="KW-0325">Glycoprotein</keyword>
<keyword id="KW-0472">Membrane</keyword>
<keyword id="KW-0539">Nucleus</keyword>
<keyword id="KW-0597">Phosphoprotein</keyword>
<keyword id="KW-1185">Reference proteome</keyword>
<keyword id="KW-0677">Repeat</keyword>
<gene>
    <name evidence="8" type="primary">Jup</name>
    <name evidence="6" type="synonym">Pg</name>
</gene>
<sequence>MEVMNLIEQPIKVTEWQQTYTYDSGIHSGVNTCVPSVSSKGLLDEDDTCGRQYTLKKTTTYTQGVPQSQGDLEYQMSTTARAKRVREAMCPGVSGEDSSLLLATQVEGQTTNLQRLAEPSQLLKSAIVHLINYQDDAELATRALPELTKLLNDEDPVVVTKAAMIVNQLSKKEASRRALMGSPQLVAAVVRTMQNTSDLDTARCTTSILHNLSHHREGLLAIFKSGGIPALVRMLSSPVESVLFYAITTLHNLLLYQEGAKMAVRLADGLQKMVPLLNKNNPKFLAITTDCLQLLAYGNQESKLIILANGGPQGLVQIMRNYSYEKLLWTTSRVLKVLSVCPSNKPAIVEAGGMQALGKHLTSNSPRLVQNCLWTLRNLSDVATKQEGLENVLKILVNQLSVDDVNVLTCATGTLSNLTCNNSKNKTLVTQNSGVEALIHAILRAGDKDDITEPAVCALRHLTSRHPEAEMAQNSVRLNYGIPAIVKLLNQPNQWPLVKATIGLIRNLALCPANHAPLQEAAVIPRLVQLLVKAHQDAQRHVAAGTQQPYTDGVRMEEIVEGCTGALHILARDPMNRMEIFRLNTIPLFVQLLYSSVENIQRVAAGVLCELAQDKEAADAIDAEGASAPLMELLHSRNEGTATYAAAVLFRISEDKNPDYRKRVSVELTNSLFKHDPAAWEAAQSMIPINEPYADDMDATYRPMYSSDVPLDPLDMHMDMDGDYPMDTYSDGLRPPYPAADHMLA</sequence>
<reference key="1">
    <citation type="journal article" date="2004" name="Genome Res.">
        <title>The status, quality, and expansion of the NIH full-length cDNA project: the Mammalian Gene Collection (MGC).</title>
        <authorList>
            <consortium name="The MGC Project Team"/>
        </authorList>
    </citation>
    <scope>NUCLEOTIDE SEQUENCE [LARGE SCALE MRNA]</scope>
    <source>
        <tissue>Prostate</tissue>
    </source>
</reference>
<reference key="2">
    <citation type="submission" date="2007-09" db="UniProtKB">
        <authorList>
            <person name="Lubec G."/>
            <person name="Kang S.U."/>
            <person name="Lubec S."/>
        </authorList>
    </citation>
    <scope>PROTEIN SEQUENCE OF 1-12; 58-81; 192-203 AND 262-279</scope>
    <scope>IDENTIFICATION BY MASS SPECTROMETRY</scope>
    <source>
        <strain>Sprague-Dawley</strain>
        <tissue>Brain</tissue>
    </source>
</reference>
<reference key="3">
    <citation type="journal article" date="2011" name="Circ. Res.">
        <title>Interactions between ankyrin-G, Plakophilin-2, and Connexin43 at the cardiac intercalated disc.</title>
        <authorList>
            <person name="Sato P.Y."/>
            <person name="Coombs W."/>
            <person name="Lin X."/>
            <person name="Nekrasova O."/>
            <person name="Green K.J."/>
            <person name="Isom L.L."/>
            <person name="Taffet S.M."/>
            <person name="Delmar M."/>
        </authorList>
    </citation>
    <scope>SUBCELLULAR LOCATION</scope>
    <scope>TISSUE SPECIFICITY</scope>
</reference>
<reference key="4">
    <citation type="journal article" date="2012" name="Nat. Commun.">
        <title>Quantitative maps of protein phosphorylation sites across 14 different rat organs and tissues.</title>
        <authorList>
            <person name="Lundby A."/>
            <person name="Secher A."/>
            <person name="Lage K."/>
            <person name="Nordsborg N.B."/>
            <person name="Dmytriyev A."/>
            <person name="Lundby C."/>
            <person name="Olsen J.V."/>
        </authorList>
    </citation>
    <scope>PHOSPHORYLATION [LARGE SCALE ANALYSIS] AT SER-182 AND SER-665</scope>
    <scope>IDENTIFICATION BY MASS SPECTROMETRY [LARGE SCALE ANALYSIS]</scope>
</reference>
<reference key="5">
    <citation type="journal article" date="2016" name="J. Cell Biol.">
        <title>Plakophilin-2 loss promotes TGF-beta1/p38 MAPK-dependent fibrotic gene expression in cardiomyocytes.</title>
        <authorList>
            <person name="Dubash A.D."/>
            <person name="Kam C.Y."/>
            <person name="Aguado B.A."/>
            <person name="Patel D.M."/>
            <person name="Delmar M."/>
            <person name="Shea L.D."/>
            <person name="Green K.J."/>
        </authorList>
    </citation>
    <scope>SUBCELLULAR LOCATION</scope>
</reference>
<accession>Q6P0K8</accession>
<protein>
    <recommendedName>
        <fullName>Junction plakoglobin</fullName>
    </recommendedName>
</protein>
<evidence type="ECO:0000250" key="1"/>
<evidence type="ECO:0000250" key="2">
    <source>
        <dbReference type="UniProtKB" id="P14923"/>
    </source>
</evidence>
<evidence type="ECO:0000250" key="3">
    <source>
        <dbReference type="UniProtKB" id="Q9PVF7"/>
    </source>
</evidence>
<evidence type="ECO:0000269" key="4">
    <source>
    </source>
</evidence>
<evidence type="ECO:0000269" key="5">
    <source>
    </source>
</evidence>
<evidence type="ECO:0000303" key="6">
    <source>
    </source>
</evidence>
<evidence type="ECO:0000305" key="7"/>
<evidence type="ECO:0000312" key="8">
    <source>
        <dbReference type="RGD" id="620412"/>
    </source>
</evidence>
<evidence type="ECO:0007744" key="9">
    <source>
    </source>
</evidence>
<feature type="chain" id="PRO_0000064281" description="Junction plakoglobin">
    <location>
        <begin position="1"/>
        <end position="745"/>
    </location>
</feature>
<feature type="repeat" description="ARM 1">
    <location>
        <begin position="132"/>
        <end position="171"/>
    </location>
</feature>
<feature type="repeat" description="ARM 2">
    <location>
        <begin position="172"/>
        <end position="215"/>
    </location>
</feature>
<feature type="repeat" description="ARM 3">
    <location>
        <begin position="216"/>
        <end position="255"/>
    </location>
</feature>
<feature type="repeat" description="ARM 4">
    <location>
        <begin position="258"/>
        <end position="297"/>
    </location>
</feature>
<feature type="repeat" description="ARM 5">
    <location>
        <begin position="298"/>
        <end position="341"/>
    </location>
</feature>
<feature type="repeat" description="ARM 6">
    <location>
        <begin position="342"/>
        <end position="381"/>
    </location>
</feature>
<feature type="repeat" description="ARM 7">
    <location>
        <begin position="383"/>
        <end position="420"/>
    </location>
</feature>
<feature type="repeat" description="ARM 8">
    <location>
        <begin position="423"/>
        <end position="464"/>
    </location>
</feature>
<feature type="repeat" description="ARM 9">
    <location>
        <begin position="470"/>
        <end position="510"/>
    </location>
</feature>
<feature type="repeat" description="ARM 10">
    <location>
        <begin position="512"/>
        <end position="551"/>
    </location>
</feature>
<feature type="repeat" description="ARM 11">
    <location>
        <begin position="574"/>
        <end position="613"/>
    </location>
</feature>
<feature type="repeat" description="ARM 12">
    <location>
        <begin position="615"/>
        <end position="661"/>
    </location>
</feature>
<feature type="region of interest" description="Interaction with DSC1 and DSG1" evidence="1">
    <location>
        <begin position="132"/>
        <end position="297"/>
    </location>
</feature>
<feature type="region of interest" description="Interaction with DSC1" evidence="1">
    <location>
        <begin position="574"/>
        <end position="661"/>
    </location>
</feature>
<feature type="modified residue" description="N-acetylmethionine" evidence="2">
    <location>
        <position position="1"/>
    </location>
</feature>
<feature type="modified residue" description="Phosphoserine" evidence="2">
    <location>
        <position position="99"/>
    </location>
</feature>
<feature type="modified residue" description="Phosphoserine" evidence="2">
    <location>
        <position position="125"/>
    </location>
</feature>
<feature type="modified residue" description="Phosphoserine" evidence="9">
    <location>
        <position position="182"/>
    </location>
</feature>
<feature type="modified residue" description="Phosphoserine" evidence="9">
    <location>
        <position position="665"/>
    </location>
</feature>
<feature type="modified residue" description="Phosphoserine" evidence="2">
    <location>
        <position position="730"/>
    </location>
</feature>
<feature type="glycosylation site" description="O-linked (GlcNAc) threonine" evidence="1">
    <location>
        <position position="14"/>
    </location>
</feature>
<name>PLAK_RAT</name>